<evidence type="ECO:0000255" key="1"/>
<evidence type="ECO:0000305" key="2"/>
<sequence length="168" mass="19159">MADPHIKSPMDFLDYLTVIIYRTGFVIAALAVLTVSWYPDLSLTFILIAATCCASSLHIYLKSFRLLFQFATWIGLLFYINHYPALALGGALLTLGGLCFKEYFCFRVPLLNLQPIFVACLWFSWVLNNLIALRIFSIISGVLLLVLAIQKWRMPLHFDIGDKTKYQI</sequence>
<feature type="chain" id="PRO_0000077892" description="Uncharacterized protein HI_0120">
    <location>
        <begin position="1"/>
        <end position="168"/>
    </location>
</feature>
<feature type="transmembrane region" description="Helical" evidence="1">
    <location>
        <begin position="15"/>
        <end position="33"/>
    </location>
</feature>
<feature type="transmembrane region" description="Helical" evidence="1">
    <location>
        <begin position="41"/>
        <end position="57"/>
    </location>
</feature>
<feature type="transmembrane region" description="Helical" evidence="1">
    <location>
        <begin position="73"/>
        <end position="93"/>
    </location>
</feature>
<feature type="transmembrane region" description="Helical" evidence="1">
    <location>
        <begin position="108"/>
        <end position="128"/>
    </location>
</feature>
<feature type="transmembrane region" description="Helical" evidence="1">
    <location>
        <begin position="129"/>
        <end position="149"/>
    </location>
</feature>
<organism>
    <name type="scientific">Haemophilus influenzae (strain ATCC 51907 / DSM 11121 / KW20 / Rd)</name>
    <dbReference type="NCBI Taxonomy" id="71421"/>
    <lineage>
        <taxon>Bacteria</taxon>
        <taxon>Pseudomonadati</taxon>
        <taxon>Pseudomonadota</taxon>
        <taxon>Gammaproteobacteria</taxon>
        <taxon>Pasteurellales</taxon>
        <taxon>Pasteurellaceae</taxon>
        <taxon>Haemophilus</taxon>
    </lineage>
</organism>
<proteinExistence type="predicted"/>
<keyword id="KW-1003">Cell membrane</keyword>
<keyword id="KW-0472">Membrane</keyword>
<keyword id="KW-1185">Reference proteome</keyword>
<keyword id="KW-0812">Transmembrane</keyword>
<keyword id="KW-1133">Transmembrane helix</keyword>
<comment type="subcellular location">
    <subcellularLocation>
        <location evidence="2">Cell membrane</location>
        <topology evidence="2">Multi-pass membrane protein</topology>
    </subcellularLocation>
</comment>
<accession>P43947</accession>
<dbReference type="EMBL" id="L42023">
    <property type="protein sequence ID" value="AAC21801.1"/>
    <property type="molecule type" value="Genomic_DNA"/>
</dbReference>
<dbReference type="PIR" id="A64002">
    <property type="entry name" value="A64002"/>
</dbReference>
<dbReference type="RefSeq" id="NP_438292.1">
    <property type="nucleotide sequence ID" value="NC_000907.1"/>
</dbReference>
<dbReference type="EnsemblBacteria" id="AAC21801">
    <property type="protein sequence ID" value="AAC21801"/>
    <property type="gene ID" value="HI_0120"/>
</dbReference>
<dbReference type="KEGG" id="hin:HI_0120"/>
<dbReference type="PATRIC" id="fig|71421.8.peg.124"/>
<dbReference type="eggNOG" id="COG5413">
    <property type="taxonomic scope" value="Bacteria"/>
</dbReference>
<dbReference type="HOGENOM" id="CLU_134855_0_0_6"/>
<dbReference type="OrthoDB" id="8447652at2"/>
<dbReference type="BioCyc" id="HINF71421:G1GJ1-130-MONOMER"/>
<dbReference type="Proteomes" id="UP000000579">
    <property type="component" value="Chromosome"/>
</dbReference>
<dbReference type="GO" id="GO:0005886">
    <property type="term" value="C:plasma membrane"/>
    <property type="evidence" value="ECO:0007669"/>
    <property type="project" value="UniProtKB-SubCell"/>
</dbReference>
<dbReference type="InterPro" id="IPR019275">
    <property type="entry name" value="DUF2301"/>
</dbReference>
<dbReference type="Pfam" id="PF10063">
    <property type="entry name" value="DUF2301"/>
    <property type="match status" value="1"/>
</dbReference>
<name>Y120_HAEIN</name>
<gene>
    <name type="ordered locus">HI_0120</name>
</gene>
<reference key="1">
    <citation type="journal article" date="1995" name="Science">
        <title>Whole-genome random sequencing and assembly of Haemophilus influenzae Rd.</title>
        <authorList>
            <person name="Fleischmann R.D."/>
            <person name="Adams M.D."/>
            <person name="White O."/>
            <person name="Clayton R.A."/>
            <person name="Kirkness E.F."/>
            <person name="Kerlavage A.R."/>
            <person name="Bult C.J."/>
            <person name="Tomb J.-F."/>
            <person name="Dougherty B.A."/>
            <person name="Merrick J.M."/>
            <person name="McKenney K."/>
            <person name="Sutton G.G."/>
            <person name="FitzHugh W."/>
            <person name="Fields C.A."/>
            <person name="Gocayne J.D."/>
            <person name="Scott J.D."/>
            <person name="Shirley R."/>
            <person name="Liu L.-I."/>
            <person name="Glodek A."/>
            <person name="Kelley J.M."/>
            <person name="Weidman J.F."/>
            <person name="Phillips C.A."/>
            <person name="Spriggs T."/>
            <person name="Hedblom E."/>
            <person name="Cotton M.D."/>
            <person name="Utterback T.R."/>
            <person name="Hanna M.C."/>
            <person name="Nguyen D.T."/>
            <person name="Saudek D.M."/>
            <person name="Brandon R.C."/>
            <person name="Fine L.D."/>
            <person name="Fritchman J.L."/>
            <person name="Fuhrmann J.L."/>
            <person name="Geoghagen N.S.M."/>
            <person name="Gnehm C.L."/>
            <person name="McDonald L.A."/>
            <person name="Small K.V."/>
            <person name="Fraser C.M."/>
            <person name="Smith H.O."/>
            <person name="Venter J.C."/>
        </authorList>
    </citation>
    <scope>NUCLEOTIDE SEQUENCE [LARGE SCALE GENOMIC DNA]</scope>
    <source>
        <strain>ATCC 51907 / DSM 11121 / KW20 / Rd</strain>
    </source>
</reference>
<protein>
    <recommendedName>
        <fullName>Uncharacterized protein HI_0120</fullName>
    </recommendedName>
</protein>